<sequence length="430" mass="46102">MSMITEIYAREILDSRGNPSVEVEVFTEDGGFGRALVPSGASTGEHEAVELRDGDKSRYLGKGVLKAVANVNDTIAPELIGYDVFDQNAIDAKMIELDGTPNKAKLGANAILGVSMAAAHAAADELGLPLYTYLGGFNAKTLPTPMMNIINGGSHADNNVDFQEFMIMPVGAPTFREALRMGAEVFHALKSVLSGMGLNTAVGDEGGFAPNLKSNEEAITVILEAIEKAGYKPGEDVYLAMDVASSEFYDKSTGKYELAGEGKSLTTAELVDFYAELVDKYPILSIEDGCDENDWDGHKLLTDKIGHKVQLVGDDLFVTNTSKLAEGIEKGIANSILIKVNQIGTLTETFDAIEMAKKAGYTAVVSHRSGETEDATIADIAVATNAGQIKTGSLSRTDRIAKYNQLLRIEDMLGDVAKYDGIKSFYNLKK</sequence>
<evidence type="ECO:0000255" key="1">
    <source>
        <dbReference type="HAMAP-Rule" id="MF_00318"/>
    </source>
</evidence>
<protein>
    <recommendedName>
        <fullName evidence="1">Enolase</fullName>
        <ecNumber evidence="1">4.2.1.11</ecNumber>
    </recommendedName>
    <alternativeName>
        <fullName evidence="1">2-phospho-D-glycerate hydro-lyase</fullName>
    </alternativeName>
    <alternativeName>
        <fullName evidence="1">2-phosphoglycerate dehydratase</fullName>
    </alternativeName>
</protein>
<keyword id="KW-0963">Cytoplasm</keyword>
<keyword id="KW-0324">Glycolysis</keyword>
<keyword id="KW-0456">Lyase</keyword>
<keyword id="KW-0460">Magnesium</keyword>
<keyword id="KW-0479">Metal-binding</keyword>
<keyword id="KW-0964">Secreted</keyword>
<gene>
    <name evidence="1" type="primary">eno</name>
    <name type="ordered locus">EAT1b_0860</name>
</gene>
<accession>C4L5H4</accession>
<comment type="function">
    <text evidence="1">Catalyzes the reversible conversion of 2-phosphoglycerate (2-PG) into phosphoenolpyruvate (PEP). It is essential for the degradation of carbohydrates via glycolysis.</text>
</comment>
<comment type="catalytic activity">
    <reaction evidence="1">
        <text>(2R)-2-phosphoglycerate = phosphoenolpyruvate + H2O</text>
        <dbReference type="Rhea" id="RHEA:10164"/>
        <dbReference type="ChEBI" id="CHEBI:15377"/>
        <dbReference type="ChEBI" id="CHEBI:58289"/>
        <dbReference type="ChEBI" id="CHEBI:58702"/>
        <dbReference type="EC" id="4.2.1.11"/>
    </reaction>
</comment>
<comment type="cofactor">
    <cofactor evidence="1">
        <name>Mg(2+)</name>
        <dbReference type="ChEBI" id="CHEBI:18420"/>
    </cofactor>
    <text evidence="1">Binds a second Mg(2+) ion via substrate during catalysis.</text>
</comment>
<comment type="pathway">
    <text evidence="1">Carbohydrate degradation; glycolysis; pyruvate from D-glyceraldehyde 3-phosphate: step 4/5.</text>
</comment>
<comment type="subcellular location">
    <subcellularLocation>
        <location evidence="1">Cytoplasm</location>
    </subcellularLocation>
    <subcellularLocation>
        <location evidence="1">Secreted</location>
    </subcellularLocation>
    <subcellularLocation>
        <location evidence="1">Cell surface</location>
    </subcellularLocation>
    <text evidence="1">Fractions of enolase are present in both the cytoplasm and on the cell surface.</text>
</comment>
<comment type="similarity">
    <text evidence="1">Belongs to the enolase family.</text>
</comment>
<proteinExistence type="inferred from homology"/>
<dbReference type="EC" id="4.2.1.11" evidence="1"/>
<dbReference type="EMBL" id="CP001615">
    <property type="protein sequence ID" value="ACQ69789.1"/>
    <property type="molecule type" value="Genomic_DNA"/>
</dbReference>
<dbReference type="RefSeq" id="WP_012726908.1">
    <property type="nucleotide sequence ID" value="NZ_MOEL01000008.1"/>
</dbReference>
<dbReference type="SMR" id="C4L5H4"/>
<dbReference type="STRING" id="360911.EAT1b_0860"/>
<dbReference type="GeneID" id="94371491"/>
<dbReference type="KEGG" id="eat:EAT1b_0860"/>
<dbReference type="eggNOG" id="COG0148">
    <property type="taxonomic scope" value="Bacteria"/>
</dbReference>
<dbReference type="HOGENOM" id="CLU_031223_2_1_9"/>
<dbReference type="OrthoDB" id="9804716at2"/>
<dbReference type="UniPathway" id="UPA00109">
    <property type="reaction ID" value="UER00187"/>
</dbReference>
<dbReference type="Proteomes" id="UP000000716">
    <property type="component" value="Chromosome"/>
</dbReference>
<dbReference type="GO" id="GO:0009986">
    <property type="term" value="C:cell surface"/>
    <property type="evidence" value="ECO:0007669"/>
    <property type="project" value="UniProtKB-SubCell"/>
</dbReference>
<dbReference type="GO" id="GO:0005576">
    <property type="term" value="C:extracellular region"/>
    <property type="evidence" value="ECO:0007669"/>
    <property type="project" value="UniProtKB-SubCell"/>
</dbReference>
<dbReference type="GO" id="GO:0000015">
    <property type="term" value="C:phosphopyruvate hydratase complex"/>
    <property type="evidence" value="ECO:0007669"/>
    <property type="project" value="InterPro"/>
</dbReference>
<dbReference type="GO" id="GO:0000287">
    <property type="term" value="F:magnesium ion binding"/>
    <property type="evidence" value="ECO:0007669"/>
    <property type="project" value="UniProtKB-UniRule"/>
</dbReference>
<dbReference type="GO" id="GO:0004634">
    <property type="term" value="F:phosphopyruvate hydratase activity"/>
    <property type="evidence" value="ECO:0007669"/>
    <property type="project" value="UniProtKB-UniRule"/>
</dbReference>
<dbReference type="GO" id="GO:0006096">
    <property type="term" value="P:glycolytic process"/>
    <property type="evidence" value="ECO:0007669"/>
    <property type="project" value="UniProtKB-UniRule"/>
</dbReference>
<dbReference type="CDD" id="cd03313">
    <property type="entry name" value="enolase"/>
    <property type="match status" value="1"/>
</dbReference>
<dbReference type="FunFam" id="3.20.20.120:FF:000001">
    <property type="entry name" value="Enolase"/>
    <property type="match status" value="1"/>
</dbReference>
<dbReference type="FunFam" id="3.30.390.10:FF:000001">
    <property type="entry name" value="Enolase"/>
    <property type="match status" value="1"/>
</dbReference>
<dbReference type="Gene3D" id="3.20.20.120">
    <property type="entry name" value="Enolase-like C-terminal domain"/>
    <property type="match status" value="1"/>
</dbReference>
<dbReference type="Gene3D" id="3.30.390.10">
    <property type="entry name" value="Enolase-like, N-terminal domain"/>
    <property type="match status" value="1"/>
</dbReference>
<dbReference type="HAMAP" id="MF_00318">
    <property type="entry name" value="Enolase"/>
    <property type="match status" value="1"/>
</dbReference>
<dbReference type="InterPro" id="IPR000941">
    <property type="entry name" value="Enolase"/>
</dbReference>
<dbReference type="InterPro" id="IPR036849">
    <property type="entry name" value="Enolase-like_C_sf"/>
</dbReference>
<dbReference type="InterPro" id="IPR029017">
    <property type="entry name" value="Enolase-like_N"/>
</dbReference>
<dbReference type="InterPro" id="IPR020810">
    <property type="entry name" value="Enolase_C"/>
</dbReference>
<dbReference type="InterPro" id="IPR020809">
    <property type="entry name" value="Enolase_CS"/>
</dbReference>
<dbReference type="InterPro" id="IPR020811">
    <property type="entry name" value="Enolase_N"/>
</dbReference>
<dbReference type="NCBIfam" id="TIGR01060">
    <property type="entry name" value="eno"/>
    <property type="match status" value="1"/>
</dbReference>
<dbReference type="PANTHER" id="PTHR11902">
    <property type="entry name" value="ENOLASE"/>
    <property type="match status" value="1"/>
</dbReference>
<dbReference type="PANTHER" id="PTHR11902:SF1">
    <property type="entry name" value="ENOLASE"/>
    <property type="match status" value="1"/>
</dbReference>
<dbReference type="Pfam" id="PF00113">
    <property type="entry name" value="Enolase_C"/>
    <property type="match status" value="1"/>
</dbReference>
<dbReference type="Pfam" id="PF03952">
    <property type="entry name" value="Enolase_N"/>
    <property type="match status" value="1"/>
</dbReference>
<dbReference type="PIRSF" id="PIRSF001400">
    <property type="entry name" value="Enolase"/>
    <property type="match status" value="1"/>
</dbReference>
<dbReference type="PRINTS" id="PR00148">
    <property type="entry name" value="ENOLASE"/>
</dbReference>
<dbReference type="SFLD" id="SFLDS00001">
    <property type="entry name" value="Enolase"/>
    <property type="match status" value="1"/>
</dbReference>
<dbReference type="SFLD" id="SFLDF00002">
    <property type="entry name" value="enolase"/>
    <property type="match status" value="1"/>
</dbReference>
<dbReference type="SMART" id="SM01192">
    <property type="entry name" value="Enolase_C"/>
    <property type="match status" value="1"/>
</dbReference>
<dbReference type="SMART" id="SM01193">
    <property type="entry name" value="Enolase_N"/>
    <property type="match status" value="1"/>
</dbReference>
<dbReference type="SUPFAM" id="SSF51604">
    <property type="entry name" value="Enolase C-terminal domain-like"/>
    <property type="match status" value="1"/>
</dbReference>
<dbReference type="SUPFAM" id="SSF54826">
    <property type="entry name" value="Enolase N-terminal domain-like"/>
    <property type="match status" value="1"/>
</dbReference>
<dbReference type="PROSITE" id="PS00164">
    <property type="entry name" value="ENOLASE"/>
    <property type="match status" value="1"/>
</dbReference>
<organism>
    <name type="scientific">Exiguobacterium sp. (strain ATCC BAA-1283 / AT1b)</name>
    <dbReference type="NCBI Taxonomy" id="360911"/>
    <lineage>
        <taxon>Bacteria</taxon>
        <taxon>Bacillati</taxon>
        <taxon>Bacillota</taxon>
        <taxon>Bacilli</taxon>
        <taxon>Bacillales</taxon>
        <taxon>Bacillales Family XII. Incertae Sedis</taxon>
        <taxon>Exiguobacterium</taxon>
    </lineage>
</organism>
<name>ENO_EXISA</name>
<reference key="1">
    <citation type="journal article" date="2011" name="J. Bacteriol.">
        <title>Complete genome sequence of the Thermophilic Bacterium Exiguobacterium sp. AT1b.</title>
        <authorList>
            <person name="Vishnivetskaya T.A."/>
            <person name="Lucas S."/>
            <person name="Copeland A."/>
            <person name="Lapidus A."/>
            <person name="Glavina del Rio T."/>
            <person name="Dalin E."/>
            <person name="Tice H."/>
            <person name="Bruce D.C."/>
            <person name="Goodwin L.A."/>
            <person name="Pitluck S."/>
            <person name="Saunders E."/>
            <person name="Brettin T."/>
            <person name="Detter C."/>
            <person name="Han C."/>
            <person name="Larimer F."/>
            <person name="Land M.L."/>
            <person name="Hauser L.J."/>
            <person name="Kyrpides N.C."/>
            <person name="Ovchinnikova G."/>
            <person name="Kathariou S."/>
            <person name="Ramaley R.F."/>
            <person name="Rodrigues D.F."/>
            <person name="Hendrix C."/>
            <person name="Richardson P."/>
            <person name="Tiedje J.M."/>
        </authorList>
    </citation>
    <scope>NUCLEOTIDE SEQUENCE [LARGE SCALE GENOMIC DNA]</scope>
    <source>
        <strain>ATCC BAA-1283 / AT1b</strain>
    </source>
</reference>
<feature type="chain" id="PRO_1000205094" description="Enolase">
    <location>
        <begin position="1"/>
        <end position="430"/>
    </location>
</feature>
<feature type="active site" description="Proton donor" evidence="1">
    <location>
        <position position="205"/>
    </location>
</feature>
<feature type="active site" description="Proton acceptor" evidence="1">
    <location>
        <position position="339"/>
    </location>
</feature>
<feature type="binding site" evidence="1">
    <location>
        <position position="163"/>
    </location>
    <ligand>
        <name>(2R)-2-phosphoglycerate</name>
        <dbReference type="ChEBI" id="CHEBI:58289"/>
    </ligand>
</feature>
<feature type="binding site" evidence="1">
    <location>
        <position position="242"/>
    </location>
    <ligand>
        <name>Mg(2+)</name>
        <dbReference type="ChEBI" id="CHEBI:18420"/>
    </ligand>
</feature>
<feature type="binding site" evidence="1">
    <location>
        <position position="287"/>
    </location>
    <ligand>
        <name>Mg(2+)</name>
        <dbReference type="ChEBI" id="CHEBI:18420"/>
    </ligand>
</feature>
<feature type="binding site" evidence="1">
    <location>
        <position position="314"/>
    </location>
    <ligand>
        <name>Mg(2+)</name>
        <dbReference type="ChEBI" id="CHEBI:18420"/>
    </ligand>
</feature>
<feature type="binding site" evidence="1">
    <location>
        <position position="339"/>
    </location>
    <ligand>
        <name>(2R)-2-phosphoglycerate</name>
        <dbReference type="ChEBI" id="CHEBI:58289"/>
    </ligand>
</feature>
<feature type="binding site" evidence="1">
    <location>
        <position position="368"/>
    </location>
    <ligand>
        <name>(2R)-2-phosphoglycerate</name>
        <dbReference type="ChEBI" id="CHEBI:58289"/>
    </ligand>
</feature>
<feature type="binding site" evidence="1">
    <location>
        <position position="369"/>
    </location>
    <ligand>
        <name>(2R)-2-phosphoglycerate</name>
        <dbReference type="ChEBI" id="CHEBI:58289"/>
    </ligand>
</feature>
<feature type="binding site" evidence="1">
    <location>
        <position position="390"/>
    </location>
    <ligand>
        <name>(2R)-2-phosphoglycerate</name>
        <dbReference type="ChEBI" id="CHEBI:58289"/>
    </ligand>
</feature>